<sequence length="110" mass="12893">MKTINLNAAVKTKCFNGKYDETMWFLMAVEGDIIEVETTEGMGTDFTFTIQVHNFFTGWIYELNTVIVGKIEQNELGEWHYVTARQRAERLIEKMKKVGKLDMQHWKVVK</sequence>
<proteinExistence type="predicted"/>
<name>Y12M_BPT4</name>
<accession>Q00305</accession>
<keyword id="KW-1185">Reference proteome</keyword>
<reference key="1">
    <citation type="journal article" date="1992" name="Gene">
        <title>Gene rIII is the nearest downstream neighbour of bacteriophage T4 gene 31.</title>
        <authorList>
            <person name="Raudonikiene A."/>
            <person name="Nivinskas R."/>
        </authorList>
    </citation>
    <scope>NUCLEOTIDE SEQUENCE [GENOMIC DNA]</scope>
</reference>
<reference key="2">
    <citation type="journal article" date="1992" name="DNA Seq.">
        <title>The nucleotide sequence between genes 31 and 30 of bacteriophage T4.</title>
        <authorList>
            <person name="Nivinskas R."/>
            <person name="Zajanckauskaite A."/>
            <person name="Raudonikiene A."/>
            <person name="Viteniene I."/>
        </authorList>
    </citation>
    <scope>NUCLEOTIDE SEQUENCE [GENOMIC DNA]</scope>
</reference>
<reference key="3">
    <citation type="journal article" date="2003" name="Microbiol. Mol. Biol. Rev.">
        <title>Bacteriophage T4 genome.</title>
        <authorList>
            <person name="Miller E.S."/>
            <person name="Kutter E."/>
            <person name="Mosig G."/>
            <person name="Arisaka F."/>
            <person name="Kunisawa T."/>
            <person name="Ruger W."/>
        </authorList>
    </citation>
    <scope>NUCLEOTIDE SEQUENCE [LARGE SCALE GENOMIC DNA]</scope>
</reference>
<reference key="4">
    <citation type="journal article" date="1990" name="Nucleic Acids Res.">
        <title>Cloning and sequencing of bacteriophage T4 genes between map positions 128.3-130.3.</title>
        <authorList>
            <person name="Prilipov A.G."/>
            <person name="Mesyanzhinov V.V."/>
            <person name="Aebi U."/>
            <person name="Kellenberger E."/>
        </authorList>
    </citation>
    <scope>NUCLEOTIDE SEQUENCE [GENOMIC DNA] OF 1-9</scope>
    <source>
        <strain>D</strain>
    </source>
</reference>
<reference key="5">
    <citation type="journal article" date="1990" name="Nucleic Acids Res.">
        <title>Nucleotide sequence of bacteriophage T4 gene 31 region.</title>
        <authorList>
            <person name="Raudonikiene A."/>
            <person name="Nivinskas R."/>
        </authorList>
    </citation>
    <scope>NUCLEOTIDE SEQUENCE [GENOMIC DNA] OF 1-9</scope>
</reference>
<organism>
    <name type="scientific">Enterobacteria phage T4</name>
    <name type="common">Bacteriophage T4</name>
    <dbReference type="NCBI Taxonomy" id="10665"/>
    <lineage>
        <taxon>Viruses</taxon>
        <taxon>Duplodnaviria</taxon>
        <taxon>Heunggongvirae</taxon>
        <taxon>Uroviricota</taxon>
        <taxon>Caudoviricetes</taxon>
        <taxon>Straboviridae</taxon>
        <taxon>Tevenvirinae</taxon>
        <taxon>Tequatrovirus</taxon>
    </lineage>
</organism>
<gene>
    <name type="primary">y12M</name>
    <name type="synonym">30.8</name>
    <name type="synonym">31.-3</name>
</gene>
<organismHost>
    <name type="scientific">Escherichia coli</name>
    <dbReference type="NCBI Taxonomy" id="562"/>
</organismHost>
<protein>
    <recommendedName>
        <fullName>Uncharacterized 12.9 kDa protein in Gp30-rIII intergenic region</fullName>
    </recommendedName>
</protein>
<feature type="chain" id="PRO_0000165173" description="Uncharacterized 12.9 kDa protein in Gp30-rIII intergenic region">
    <location>
        <begin position="1"/>
        <end position="110"/>
    </location>
</feature>
<dbReference type="EMBL" id="X58544">
    <property type="protein sequence ID" value="CAA41435.1"/>
    <property type="molecule type" value="Genomic_DNA"/>
</dbReference>
<dbReference type="EMBL" id="M37882">
    <property type="protein sequence ID" value="AAA32509.1"/>
    <property type="molecule type" value="Genomic_DNA"/>
</dbReference>
<dbReference type="EMBL" id="AF158101">
    <property type="protein sequence ID" value="AAD42449.1"/>
    <property type="molecule type" value="Genomic_DNA"/>
</dbReference>
<dbReference type="EMBL" id="X17657">
    <property type="status" value="NOT_ANNOTATED_CDS"/>
    <property type="molecule type" value="Genomic_DNA"/>
</dbReference>
<dbReference type="PIR" id="S26167">
    <property type="entry name" value="S26167"/>
</dbReference>
<dbReference type="RefSeq" id="NP_049822.1">
    <property type="nucleotide sequence ID" value="NC_000866.4"/>
</dbReference>
<dbReference type="GeneID" id="1258743"/>
<dbReference type="KEGG" id="vg:1258743"/>
<dbReference type="OrthoDB" id="19390at10239"/>
<dbReference type="Proteomes" id="UP000009087">
    <property type="component" value="Segment"/>
</dbReference>
<dbReference type="InterPro" id="IPR009258">
    <property type="entry name" value="Phage_T4_Gp30.8"/>
</dbReference>
<dbReference type="Pfam" id="PF06019">
    <property type="entry name" value="Phage_30_8"/>
    <property type="match status" value="1"/>
</dbReference>